<accession>Q5K472</accession>
<name>HEMT1_GOLVU</name>
<keyword id="KW-0408">Iron</keyword>
<keyword id="KW-0479">Metal-binding</keyword>
<keyword id="KW-0561">Oxygen transport</keyword>
<keyword id="KW-0813">Transport</keyword>
<organism>
    <name type="scientific">Golfingia vulgaris</name>
    <name type="common">Marine worm</name>
    <dbReference type="NCBI Taxonomy" id="210797"/>
    <lineage>
        <taxon>Eukaryota</taxon>
        <taxon>Metazoa</taxon>
        <taxon>Spiralia</taxon>
        <taxon>Lophotrochozoa</taxon>
        <taxon>Annelida</taxon>
        <taxon>Sipuncula</taxon>
        <taxon>Sipunculidea</taxon>
        <taxon>Golfingiida</taxon>
        <taxon>Golfingiidae</taxon>
        <taxon>Golfingia</taxon>
    </lineage>
</organism>
<protein>
    <recommendedName>
        <fullName>Hemerythrin subunit 1</fullName>
        <shortName>Hr 1</shortName>
    </recommendedName>
</protein>
<proteinExistence type="inferred from homology"/>
<feature type="chain" id="PRO_0000343352" description="Hemerythrin subunit 1">
    <location>
        <begin position="1"/>
        <end position="114"/>
    </location>
</feature>
<feature type="binding site" evidence="2">
    <location>
        <position position="26"/>
    </location>
    <ligand>
        <name>Fe cation</name>
        <dbReference type="ChEBI" id="CHEBI:24875"/>
        <label>1</label>
    </ligand>
</feature>
<feature type="binding site" evidence="2">
    <location>
        <position position="55"/>
    </location>
    <ligand>
        <name>Fe cation</name>
        <dbReference type="ChEBI" id="CHEBI:24875"/>
        <label>1</label>
    </ligand>
</feature>
<feature type="binding site" evidence="2">
    <location>
        <position position="59"/>
    </location>
    <ligand>
        <name>Fe cation</name>
        <dbReference type="ChEBI" id="CHEBI:24875"/>
        <label>1</label>
    </ligand>
</feature>
<feature type="binding site" evidence="2">
    <location>
        <position position="59"/>
    </location>
    <ligand>
        <name>Fe cation</name>
        <dbReference type="ChEBI" id="CHEBI:24875"/>
        <label>2</label>
    </ligand>
</feature>
<feature type="binding site" evidence="2">
    <location>
        <position position="74"/>
    </location>
    <ligand>
        <name>Fe cation</name>
        <dbReference type="ChEBI" id="CHEBI:24875"/>
        <label>2</label>
    </ligand>
</feature>
<feature type="binding site" evidence="2">
    <location>
        <position position="78"/>
    </location>
    <ligand>
        <name>Fe cation</name>
        <dbReference type="ChEBI" id="CHEBI:24875"/>
        <label>2</label>
    </ligand>
</feature>
<feature type="binding site" evidence="2">
    <location>
        <position position="102"/>
    </location>
    <ligand>
        <name>Fe cation</name>
        <dbReference type="ChEBI" id="CHEBI:24875"/>
        <label>2</label>
    </ligand>
</feature>
<feature type="binding site" evidence="2">
    <location>
        <position position="107"/>
    </location>
    <ligand>
        <name>Fe cation</name>
        <dbReference type="ChEBI" id="CHEBI:24875"/>
        <label>1</label>
    </ligand>
</feature>
<feature type="binding site" evidence="2">
    <location>
        <position position="107"/>
    </location>
    <ligand>
        <name>Fe cation</name>
        <dbReference type="ChEBI" id="CHEBI:24875"/>
        <label>2</label>
    </ligand>
</feature>
<evidence type="ECO:0000250" key="1"/>
<evidence type="ECO:0000250" key="2">
    <source>
        <dbReference type="UniProtKB" id="P02244"/>
    </source>
</evidence>
<evidence type="ECO:0000305" key="3"/>
<comment type="function">
    <text evidence="1">Hemerythrin is a respiratory protein in blood cells of certain marine worms. The oxygen-binding site in each chain contains two iron atoms (By similarity).</text>
</comment>
<comment type="similarity">
    <text evidence="3">Belongs to the hemerythrin family.</text>
</comment>
<sequence length="114" mass="13573">MGFPIPDPYVWDPSFRTFYTAIDDEHKTLFDGIFHLARDDNKDNLGELRRCTGKHFLNEQVMMQASQYAGYDEHKKAHDEFIHQLDHWKGDSNWAKTWLVNHIKTIDFKYKGKI</sequence>
<reference key="1">
    <citation type="submission" date="2004-03" db="EMBL/GenBank/DDBJ databases">
        <title>Molecular evolution and phylogeny of Sipuculans hemerythrins.</title>
        <authorList>
            <person name="Vanin S."/>
            <person name="Negrisolo E."/>
            <person name="Bailly X."/>
            <person name="Bubacco L."/>
            <person name="Beltramini M."/>
            <person name="Salvato B."/>
        </authorList>
    </citation>
    <scope>NUCLEOTIDE SEQUENCE [MRNA]</scope>
</reference>
<dbReference type="EMBL" id="AJ632199">
    <property type="protein sequence ID" value="CAG14945.1"/>
    <property type="molecule type" value="mRNA"/>
</dbReference>
<dbReference type="SMR" id="Q5K472"/>
<dbReference type="GO" id="GO:0005506">
    <property type="term" value="F:iron ion binding"/>
    <property type="evidence" value="ECO:0007669"/>
    <property type="project" value="InterPro"/>
</dbReference>
<dbReference type="GO" id="GO:0005344">
    <property type="term" value="F:oxygen carrier activity"/>
    <property type="evidence" value="ECO:0007669"/>
    <property type="project" value="UniProtKB-KW"/>
</dbReference>
<dbReference type="Gene3D" id="1.20.120.50">
    <property type="entry name" value="Hemerythrin-like"/>
    <property type="match status" value="1"/>
</dbReference>
<dbReference type="InterPro" id="IPR002063">
    <property type="entry name" value="Haemerythrin"/>
</dbReference>
<dbReference type="InterPro" id="IPR016131">
    <property type="entry name" value="Haemerythrin_Fe_BS"/>
</dbReference>
<dbReference type="InterPro" id="IPR050669">
    <property type="entry name" value="Hemerythrin"/>
</dbReference>
<dbReference type="InterPro" id="IPR012312">
    <property type="entry name" value="Hemerythrin-like"/>
</dbReference>
<dbReference type="InterPro" id="IPR035938">
    <property type="entry name" value="Hemerythrin-like_sf"/>
</dbReference>
<dbReference type="InterPro" id="IPR012827">
    <property type="entry name" value="Hemerythrin_metal-bd"/>
</dbReference>
<dbReference type="NCBIfam" id="TIGR02481">
    <property type="entry name" value="hemeryth_dom"/>
    <property type="match status" value="1"/>
</dbReference>
<dbReference type="NCBIfam" id="TIGR00058">
    <property type="entry name" value="Hemerythrin"/>
    <property type="match status" value="1"/>
</dbReference>
<dbReference type="PANTHER" id="PTHR37164">
    <property type="entry name" value="BACTERIOHEMERYTHRIN"/>
    <property type="match status" value="1"/>
</dbReference>
<dbReference type="PANTHER" id="PTHR37164:SF1">
    <property type="entry name" value="BACTERIOHEMERYTHRIN"/>
    <property type="match status" value="1"/>
</dbReference>
<dbReference type="Pfam" id="PF01814">
    <property type="entry name" value="Hemerythrin"/>
    <property type="match status" value="1"/>
</dbReference>
<dbReference type="PIRSF" id="PIRSF002033">
    <property type="entry name" value="Hemerythrin"/>
    <property type="match status" value="1"/>
</dbReference>
<dbReference type="PRINTS" id="PR00186">
    <property type="entry name" value="HEMERYTHRIN"/>
</dbReference>
<dbReference type="SUPFAM" id="SSF47188">
    <property type="entry name" value="Hemerythrin-like"/>
    <property type="match status" value="1"/>
</dbReference>
<dbReference type="PROSITE" id="PS00550">
    <property type="entry name" value="HEMERYTHRINS"/>
    <property type="match status" value="1"/>
</dbReference>